<name>CHEB_NITHX</name>
<dbReference type="EC" id="3.1.1.61" evidence="1"/>
<dbReference type="EC" id="3.5.1.44" evidence="1"/>
<dbReference type="EMBL" id="CP000319">
    <property type="protein sequence ID" value="ABE64103.1"/>
    <property type="molecule type" value="Genomic_DNA"/>
</dbReference>
<dbReference type="RefSeq" id="WP_011511756.1">
    <property type="nucleotide sequence ID" value="NC_007964.1"/>
</dbReference>
<dbReference type="SMR" id="Q1QI44"/>
<dbReference type="STRING" id="323097.Nham_3373"/>
<dbReference type="KEGG" id="nha:Nham_3373"/>
<dbReference type="eggNOG" id="COG2201">
    <property type="taxonomic scope" value="Bacteria"/>
</dbReference>
<dbReference type="HOGENOM" id="CLU_000445_51_0_5"/>
<dbReference type="OrthoDB" id="9793421at2"/>
<dbReference type="Proteomes" id="UP000001953">
    <property type="component" value="Chromosome"/>
</dbReference>
<dbReference type="GO" id="GO:0005737">
    <property type="term" value="C:cytoplasm"/>
    <property type="evidence" value="ECO:0007669"/>
    <property type="project" value="UniProtKB-SubCell"/>
</dbReference>
<dbReference type="GO" id="GO:0000156">
    <property type="term" value="F:phosphorelay response regulator activity"/>
    <property type="evidence" value="ECO:0007669"/>
    <property type="project" value="InterPro"/>
</dbReference>
<dbReference type="GO" id="GO:0008984">
    <property type="term" value="F:protein-glutamate methylesterase activity"/>
    <property type="evidence" value="ECO:0007669"/>
    <property type="project" value="UniProtKB-UniRule"/>
</dbReference>
<dbReference type="GO" id="GO:0050568">
    <property type="term" value="F:protein-glutamine glutaminase activity"/>
    <property type="evidence" value="ECO:0007669"/>
    <property type="project" value="UniProtKB-UniRule"/>
</dbReference>
<dbReference type="GO" id="GO:0006935">
    <property type="term" value="P:chemotaxis"/>
    <property type="evidence" value="ECO:0007669"/>
    <property type="project" value="UniProtKB-UniRule"/>
</dbReference>
<dbReference type="CDD" id="cd16432">
    <property type="entry name" value="CheB_Rec"/>
    <property type="match status" value="1"/>
</dbReference>
<dbReference type="CDD" id="cd17541">
    <property type="entry name" value="REC_CheB-like"/>
    <property type="match status" value="1"/>
</dbReference>
<dbReference type="Gene3D" id="3.40.50.2300">
    <property type="match status" value="1"/>
</dbReference>
<dbReference type="Gene3D" id="3.40.50.180">
    <property type="entry name" value="Methylesterase CheB, C-terminal domain"/>
    <property type="match status" value="1"/>
</dbReference>
<dbReference type="HAMAP" id="MF_00099">
    <property type="entry name" value="CheB_chemtxs"/>
    <property type="match status" value="1"/>
</dbReference>
<dbReference type="InterPro" id="IPR008248">
    <property type="entry name" value="CheB-like"/>
</dbReference>
<dbReference type="InterPro" id="IPR035909">
    <property type="entry name" value="CheB_C"/>
</dbReference>
<dbReference type="InterPro" id="IPR011006">
    <property type="entry name" value="CheY-like_superfamily"/>
</dbReference>
<dbReference type="InterPro" id="IPR000673">
    <property type="entry name" value="Sig_transdc_resp-reg_Me-estase"/>
</dbReference>
<dbReference type="InterPro" id="IPR001789">
    <property type="entry name" value="Sig_transdc_resp-reg_receiver"/>
</dbReference>
<dbReference type="NCBIfam" id="NF001965">
    <property type="entry name" value="PRK00742.1"/>
    <property type="match status" value="1"/>
</dbReference>
<dbReference type="PANTHER" id="PTHR42872">
    <property type="entry name" value="PROTEIN-GLUTAMATE METHYLESTERASE/PROTEIN-GLUTAMINE GLUTAMINASE"/>
    <property type="match status" value="1"/>
</dbReference>
<dbReference type="PANTHER" id="PTHR42872:SF3">
    <property type="entry name" value="PROTEIN-GLUTAMATE METHYLESTERASE_PROTEIN-GLUTAMINE GLUTAMINASE 1"/>
    <property type="match status" value="1"/>
</dbReference>
<dbReference type="Pfam" id="PF01339">
    <property type="entry name" value="CheB_methylest"/>
    <property type="match status" value="1"/>
</dbReference>
<dbReference type="Pfam" id="PF00072">
    <property type="entry name" value="Response_reg"/>
    <property type="match status" value="1"/>
</dbReference>
<dbReference type="PIRSF" id="PIRSF000876">
    <property type="entry name" value="RR_chemtxs_CheB"/>
    <property type="match status" value="1"/>
</dbReference>
<dbReference type="SMART" id="SM00448">
    <property type="entry name" value="REC"/>
    <property type="match status" value="1"/>
</dbReference>
<dbReference type="SUPFAM" id="SSF52172">
    <property type="entry name" value="CheY-like"/>
    <property type="match status" value="1"/>
</dbReference>
<dbReference type="SUPFAM" id="SSF52738">
    <property type="entry name" value="Methylesterase CheB, C-terminal domain"/>
    <property type="match status" value="1"/>
</dbReference>
<dbReference type="PROSITE" id="PS50122">
    <property type="entry name" value="CHEB"/>
    <property type="match status" value="1"/>
</dbReference>
<dbReference type="PROSITE" id="PS50110">
    <property type="entry name" value="RESPONSE_REGULATORY"/>
    <property type="match status" value="1"/>
</dbReference>
<sequence length="381" mass="40227">MRTAVASPAALDSGRQEPLRVMVVDDSVVIRGLISRWIEAEPDMVVAASLRTGLDAVNQVERANPDVVVLDIEMPELDGISALPQLLAKKRNLIVIMASTLTRRNAEISFKALSLGAADYIPKPESTREIAAADIFKHDLIQKIRHLAAKRRRPAALASAREPEPRPIQATPVPAHSAPVLRPFSTHAPRALLIGSSTGGPQALMTLVAGIGPVIDRYPVLITQHMPPTFTTILAEHLARAAGRPAHEGVDEEIVKPGHIYLATGGRHMRLARKGTGAVIVLDDGPAVNFCKPAVDPLFTSAIDVWQGGILAVILTGMGSDGMRGGQQIVAAGGNVIAQDEASSVVWGMPGAAAQAGICAAVLPLQQIAPKLVRLFAGDHS</sequence>
<accession>Q1QI44</accession>
<proteinExistence type="inferred from homology"/>
<organism>
    <name type="scientific">Nitrobacter hamburgensis (strain DSM 10229 / NCIMB 13809 / X14)</name>
    <dbReference type="NCBI Taxonomy" id="323097"/>
    <lineage>
        <taxon>Bacteria</taxon>
        <taxon>Pseudomonadati</taxon>
        <taxon>Pseudomonadota</taxon>
        <taxon>Alphaproteobacteria</taxon>
        <taxon>Hyphomicrobiales</taxon>
        <taxon>Nitrobacteraceae</taxon>
        <taxon>Nitrobacter</taxon>
    </lineage>
</organism>
<feature type="chain" id="PRO_0000264297" description="Protein-glutamate methylesterase/protein-glutamine glutaminase">
    <location>
        <begin position="1"/>
        <end position="381"/>
    </location>
</feature>
<feature type="domain" description="Response regulatory" evidence="1">
    <location>
        <begin position="20"/>
        <end position="138"/>
    </location>
</feature>
<feature type="domain" description="CheB-type methylesterase" evidence="1">
    <location>
        <begin position="183"/>
        <end position="373"/>
    </location>
</feature>
<feature type="region of interest" description="Disordered" evidence="2">
    <location>
        <begin position="154"/>
        <end position="176"/>
    </location>
</feature>
<feature type="active site" evidence="1">
    <location>
        <position position="197"/>
    </location>
</feature>
<feature type="active site" evidence="1">
    <location>
        <position position="225"/>
    </location>
</feature>
<feature type="active site" evidence="1">
    <location>
        <position position="321"/>
    </location>
</feature>
<feature type="modified residue" description="4-aspartylphosphate" evidence="1">
    <location>
        <position position="71"/>
    </location>
</feature>
<gene>
    <name evidence="1" type="primary">cheB</name>
    <name type="ordered locus">Nham_3373</name>
</gene>
<keyword id="KW-0145">Chemotaxis</keyword>
<keyword id="KW-0963">Cytoplasm</keyword>
<keyword id="KW-0378">Hydrolase</keyword>
<keyword id="KW-0597">Phosphoprotein</keyword>
<keyword id="KW-1185">Reference proteome</keyword>
<protein>
    <recommendedName>
        <fullName evidence="1">Protein-glutamate methylesterase/protein-glutamine glutaminase</fullName>
        <ecNumber evidence="1">3.1.1.61</ecNumber>
        <ecNumber evidence="1">3.5.1.44</ecNumber>
    </recommendedName>
</protein>
<reference key="1">
    <citation type="submission" date="2006-03" db="EMBL/GenBank/DDBJ databases">
        <title>Complete sequence of chromosome of Nitrobacter hamburgensis X14.</title>
        <authorList>
            <consortium name="US DOE Joint Genome Institute"/>
            <person name="Copeland A."/>
            <person name="Lucas S."/>
            <person name="Lapidus A."/>
            <person name="Barry K."/>
            <person name="Detter J.C."/>
            <person name="Glavina del Rio T."/>
            <person name="Hammon N."/>
            <person name="Israni S."/>
            <person name="Dalin E."/>
            <person name="Tice H."/>
            <person name="Pitluck S."/>
            <person name="Chain P."/>
            <person name="Malfatti S."/>
            <person name="Shin M."/>
            <person name="Vergez L."/>
            <person name="Schmutz J."/>
            <person name="Larimer F."/>
            <person name="Land M."/>
            <person name="Hauser L."/>
            <person name="Kyrpides N."/>
            <person name="Ivanova N."/>
            <person name="Ward B."/>
            <person name="Arp D."/>
            <person name="Klotz M."/>
            <person name="Stein L."/>
            <person name="O'Mullan G."/>
            <person name="Starkenburg S."/>
            <person name="Sayavedra L."/>
            <person name="Poret-Peterson A.T."/>
            <person name="Gentry M.E."/>
            <person name="Bruce D."/>
            <person name="Richardson P."/>
        </authorList>
    </citation>
    <scope>NUCLEOTIDE SEQUENCE [LARGE SCALE GENOMIC DNA]</scope>
    <source>
        <strain>DSM 10229 / NCIMB 13809 / X14</strain>
    </source>
</reference>
<evidence type="ECO:0000255" key="1">
    <source>
        <dbReference type="HAMAP-Rule" id="MF_00099"/>
    </source>
</evidence>
<evidence type="ECO:0000256" key="2">
    <source>
        <dbReference type="SAM" id="MobiDB-lite"/>
    </source>
</evidence>
<comment type="function">
    <text evidence="1">Involved in chemotaxis. Part of a chemotaxis signal transduction system that modulates chemotaxis in response to various stimuli. Catalyzes the demethylation of specific methylglutamate residues introduced into the chemoreceptors (methyl-accepting chemotaxis proteins or MCP) by CheR. Also mediates the irreversible deamidation of specific glutamine residues to glutamic acid.</text>
</comment>
<comment type="catalytic activity">
    <reaction evidence="1">
        <text>[protein]-L-glutamate 5-O-methyl ester + H2O = L-glutamyl-[protein] + methanol + H(+)</text>
        <dbReference type="Rhea" id="RHEA:23236"/>
        <dbReference type="Rhea" id="RHEA-COMP:10208"/>
        <dbReference type="Rhea" id="RHEA-COMP:10311"/>
        <dbReference type="ChEBI" id="CHEBI:15377"/>
        <dbReference type="ChEBI" id="CHEBI:15378"/>
        <dbReference type="ChEBI" id="CHEBI:17790"/>
        <dbReference type="ChEBI" id="CHEBI:29973"/>
        <dbReference type="ChEBI" id="CHEBI:82795"/>
        <dbReference type="EC" id="3.1.1.61"/>
    </reaction>
</comment>
<comment type="catalytic activity">
    <reaction evidence="1">
        <text>L-glutaminyl-[protein] + H2O = L-glutamyl-[protein] + NH4(+)</text>
        <dbReference type="Rhea" id="RHEA:16441"/>
        <dbReference type="Rhea" id="RHEA-COMP:10207"/>
        <dbReference type="Rhea" id="RHEA-COMP:10208"/>
        <dbReference type="ChEBI" id="CHEBI:15377"/>
        <dbReference type="ChEBI" id="CHEBI:28938"/>
        <dbReference type="ChEBI" id="CHEBI:29973"/>
        <dbReference type="ChEBI" id="CHEBI:30011"/>
        <dbReference type="EC" id="3.5.1.44"/>
    </reaction>
</comment>
<comment type="subcellular location">
    <subcellularLocation>
        <location evidence="1">Cytoplasm</location>
    </subcellularLocation>
</comment>
<comment type="domain">
    <text evidence="1">Contains a C-terminal catalytic domain, and an N-terminal region which modulates catalytic activity.</text>
</comment>
<comment type="PTM">
    <text evidence="1">Phosphorylated by CheA. Phosphorylation of the N-terminal regulatory domain activates the methylesterase activity.</text>
</comment>
<comment type="similarity">
    <text evidence="1">Belongs to the CheB family.</text>
</comment>